<protein>
    <recommendedName>
        <fullName evidence="1">Proline--tRNA ligase</fullName>
        <ecNumber evidence="1">6.1.1.15</ecNumber>
    </recommendedName>
    <alternativeName>
        <fullName evidence="1">Prolyl-tRNA synthetase</fullName>
        <shortName evidence="1">ProRS</shortName>
    </alternativeName>
</protein>
<reference key="1">
    <citation type="journal article" date="2006" name="BMC Genomics">
        <title>Complete genome sequence of Shigella flexneri 5b and comparison with Shigella flexneri 2a.</title>
        <authorList>
            <person name="Nie H."/>
            <person name="Yang F."/>
            <person name="Zhang X."/>
            <person name="Yang J."/>
            <person name="Chen L."/>
            <person name="Wang J."/>
            <person name="Xiong Z."/>
            <person name="Peng J."/>
            <person name="Sun L."/>
            <person name="Dong J."/>
            <person name="Xue Y."/>
            <person name="Xu X."/>
            <person name="Chen S."/>
            <person name="Yao Z."/>
            <person name="Shen Y."/>
            <person name="Jin Q."/>
        </authorList>
    </citation>
    <scope>NUCLEOTIDE SEQUENCE [LARGE SCALE GENOMIC DNA]</scope>
    <source>
        <strain>8401</strain>
    </source>
</reference>
<gene>
    <name evidence="1" type="primary">proS</name>
    <name type="ordered locus">SFV_0178</name>
</gene>
<comment type="function">
    <text evidence="1">Catalyzes the attachment of proline to tRNA(Pro) in a two-step reaction: proline is first activated by ATP to form Pro-AMP and then transferred to the acceptor end of tRNA(Pro). As ProRS can inadvertently accommodate and process non-cognate amino acids such as alanine and cysteine, to avoid such errors it has two additional distinct editing activities against alanine. One activity is designated as 'pretransfer' editing and involves the tRNA(Pro)-independent hydrolysis of activated Ala-AMP. The other activity is designated 'posttransfer' editing and involves deacylation of mischarged Ala-tRNA(Pro). The misacylated Cys-tRNA(Pro) is not edited by ProRS.</text>
</comment>
<comment type="catalytic activity">
    <reaction evidence="1">
        <text>tRNA(Pro) + L-proline + ATP = L-prolyl-tRNA(Pro) + AMP + diphosphate</text>
        <dbReference type="Rhea" id="RHEA:14305"/>
        <dbReference type="Rhea" id="RHEA-COMP:9700"/>
        <dbReference type="Rhea" id="RHEA-COMP:9702"/>
        <dbReference type="ChEBI" id="CHEBI:30616"/>
        <dbReference type="ChEBI" id="CHEBI:33019"/>
        <dbReference type="ChEBI" id="CHEBI:60039"/>
        <dbReference type="ChEBI" id="CHEBI:78442"/>
        <dbReference type="ChEBI" id="CHEBI:78532"/>
        <dbReference type="ChEBI" id="CHEBI:456215"/>
        <dbReference type="EC" id="6.1.1.15"/>
    </reaction>
</comment>
<comment type="subunit">
    <text evidence="1">Homodimer.</text>
</comment>
<comment type="subcellular location">
    <subcellularLocation>
        <location evidence="1">Cytoplasm</location>
    </subcellularLocation>
</comment>
<comment type="domain">
    <text evidence="1">Consists of three domains: the N-terminal catalytic domain, the editing domain and the C-terminal anticodon-binding domain.</text>
</comment>
<comment type="similarity">
    <text evidence="1">Belongs to the class-II aminoacyl-tRNA synthetase family. ProS type 1 subfamily.</text>
</comment>
<comment type="sequence caution" evidence="2">
    <conflict type="erroneous initiation">
        <sequence resource="EMBL-CDS" id="ABF02461"/>
    </conflict>
</comment>
<accession>Q0T815</accession>
<name>SYP_SHIF8</name>
<proteinExistence type="inferred from homology"/>
<dbReference type="EC" id="6.1.1.15" evidence="1"/>
<dbReference type="EMBL" id="CP000266">
    <property type="protein sequence ID" value="ABF02461.1"/>
    <property type="status" value="ALT_INIT"/>
    <property type="molecule type" value="Genomic_DNA"/>
</dbReference>
<dbReference type="RefSeq" id="WP_001260712.1">
    <property type="nucleotide sequence ID" value="NC_008258.1"/>
</dbReference>
<dbReference type="SMR" id="Q0T815"/>
<dbReference type="GeneID" id="93777229"/>
<dbReference type="KEGG" id="sfv:SFV_0178"/>
<dbReference type="HOGENOM" id="CLU_016739_0_0_6"/>
<dbReference type="Proteomes" id="UP000000659">
    <property type="component" value="Chromosome"/>
</dbReference>
<dbReference type="GO" id="GO:0005829">
    <property type="term" value="C:cytosol"/>
    <property type="evidence" value="ECO:0007669"/>
    <property type="project" value="TreeGrafter"/>
</dbReference>
<dbReference type="GO" id="GO:0002161">
    <property type="term" value="F:aminoacyl-tRNA deacylase activity"/>
    <property type="evidence" value="ECO:0007669"/>
    <property type="project" value="InterPro"/>
</dbReference>
<dbReference type="GO" id="GO:0005524">
    <property type="term" value="F:ATP binding"/>
    <property type="evidence" value="ECO:0007669"/>
    <property type="project" value="UniProtKB-UniRule"/>
</dbReference>
<dbReference type="GO" id="GO:0004827">
    <property type="term" value="F:proline-tRNA ligase activity"/>
    <property type="evidence" value="ECO:0007669"/>
    <property type="project" value="UniProtKB-UniRule"/>
</dbReference>
<dbReference type="GO" id="GO:0006433">
    <property type="term" value="P:prolyl-tRNA aminoacylation"/>
    <property type="evidence" value="ECO:0007669"/>
    <property type="project" value="UniProtKB-UniRule"/>
</dbReference>
<dbReference type="CDD" id="cd04334">
    <property type="entry name" value="ProRS-INS"/>
    <property type="match status" value="1"/>
</dbReference>
<dbReference type="CDD" id="cd00861">
    <property type="entry name" value="ProRS_anticodon_short"/>
    <property type="match status" value="1"/>
</dbReference>
<dbReference type="CDD" id="cd00779">
    <property type="entry name" value="ProRS_core_prok"/>
    <property type="match status" value="1"/>
</dbReference>
<dbReference type="FunFam" id="3.30.930.10:FF:000012">
    <property type="entry name" value="Proline--tRNA ligase"/>
    <property type="match status" value="1"/>
</dbReference>
<dbReference type="FunFam" id="3.30.930.10:FF:000097">
    <property type="entry name" value="Proline--tRNA ligase"/>
    <property type="match status" value="1"/>
</dbReference>
<dbReference type="FunFam" id="3.40.50.800:FF:000006">
    <property type="entry name" value="Proline--tRNA ligase"/>
    <property type="match status" value="1"/>
</dbReference>
<dbReference type="FunFam" id="3.90.960.10:FF:000001">
    <property type="entry name" value="Proline--tRNA ligase"/>
    <property type="match status" value="1"/>
</dbReference>
<dbReference type="Gene3D" id="3.40.50.800">
    <property type="entry name" value="Anticodon-binding domain"/>
    <property type="match status" value="1"/>
</dbReference>
<dbReference type="Gene3D" id="3.30.930.10">
    <property type="entry name" value="Bira Bifunctional Protein, Domain 2"/>
    <property type="match status" value="2"/>
</dbReference>
<dbReference type="Gene3D" id="3.90.960.10">
    <property type="entry name" value="YbaK/aminoacyl-tRNA synthetase-associated domain"/>
    <property type="match status" value="1"/>
</dbReference>
<dbReference type="HAMAP" id="MF_01569">
    <property type="entry name" value="Pro_tRNA_synth_type1"/>
    <property type="match status" value="1"/>
</dbReference>
<dbReference type="InterPro" id="IPR002314">
    <property type="entry name" value="aa-tRNA-synt_IIb"/>
</dbReference>
<dbReference type="InterPro" id="IPR006195">
    <property type="entry name" value="aa-tRNA-synth_II"/>
</dbReference>
<dbReference type="InterPro" id="IPR045864">
    <property type="entry name" value="aa-tRNA-synth_II/BPL/LPL"/>
</dbReference>
<dbReference type="InterPro" id="IPR004154">
    <property type="entry name" value="Anticodon-bd"/>
</dbReference>
<dbReference type="InterPro" id="IPR036621">
    <property type="entry name" value="Anticodon-bd_dom_sf"/>
</dbReference>
<dbReference type="InterPro" id="IPR002316">
    <property type="entry name" value="Pro-tRNA-ligase_IIa"/>
</dbReference>
<dbReference type="InterPro" id="IPR004500">
    <property type="entry name" value="Pro-tRNA-synth_IIa_bac-type"/>
</dbReference>
<dbReference type="InterPro" id="IPR023717">
    <property type="entry name" value="Pro-tRNA-Synthase_IIa_type1"/>
</dbReference>
<dbReference type="InterPro" id="IPR050062">
    <property type="entry name" value="Pro-tRNA_synthetase"/>
</dbReference>
<dbReference type="InterPro" id="IPR044140">
    <property type="entry name" value="ProRS_anticodon_short"/>
</dbReference>
<dbReference type="InterPro" id="IPR033730">
    <property type="entry name" value="ProRS_core_prok"/>
</dbReference>
<dbReference type="InterPro" id="IPR036754">
    <property type="entry name" value="YbaK/aa-tRNA-synt-asso_dom_sf"/>
</dbReference>
<dbReference type="InterPro" id="IPR007214">
    <property type="entry name" value="YbaK/aa-tRNA-synth-assoc-dom"/>
</dbReference>
<dbReference type="NCBIfam" id="NF006625">
    <property type="entry name" value="PRK09194.1"/>
    <property type="match status" value="1"/>
</dbReference>
<dbReference type="NCBIfam" id="TIGR00409">
    <property type="entry name" value="proS_fam_II"/>
    <property type="match status" value="1"/>
</dbReference>
<dbReference type="PANTHER" id="PTHR42753">
    <property type="entry name" value="MITOCHONDRIAL RIBOSOME PROTEIN L39/PROLYL-TRNA LIGASE FAMILY MEMBER"/>
    <property type="match status" value="1"/>
</dbReference>
<dbReference type="PANTHER" id="PTHR42753:SF2">
    <property type="entry name" value="PROLINE--TRNA LIGASE"/>
    <property type="match status" value="1"/>
</dbReference>
<dbReference type="Pfam" id="PF03129">
    <property type="entry name" value="HGTP_anticodon"/>
    <property type="match status" value="1"/>
</dbReference>
<dbReference type="Pfam" id="PF00587">
    <property type="entry name" value="tRNA-synt_2b"/>
    <property type="match status" value="1"/>
</dbReference>
<dbReference type="Pfam" id="PF04073">
    <property type="entry name" value="tRNA_edit"/>
    <property type="match status" value="1"/>
</dbReference>
<dbReference type="PIRSF" id="PIRSF001535">
    <property type="entry name" value="ProRS_1"/>
    <property type="match status" value="1"/>
</dbReference>
<dbReference type="PRINTS" id="PR01046">
    <property type="entry name" value="TRNASYNTHPRO"/>
</dbReference>
<dbReference type="SUPFAM" id="SSF52954">
    <property type="entry name" value="Class II aaRS ABD-related"/>
    <property type="match status" value="1"/>
</dbReference>
<dbReference type="SUPFAM" id="SSF55681">
    <property type="entry name" value="Class II aaRS and biotin synthetases"/>
    <property type="match status" value="1"/>
</dbReference>
<dbReference type="SUPFAM" id="SSF55826">
    <property type="entry name" value="YbaK/ProRS associated domain"/>
    <property type="match status" value="1"/>
</dbReference>
<dbReference type="PROSITE" id="PS50862">
    <property type="entry name" value="AA_TRNA_LIGASE_II"/>
    <property type="match status" value="1"/>
</dbReference>
<sequence>MRTSQYLLSTLKETPADAEVISHQLMLRAGMIRKLASGLYTWLPTGVRVLKKVENIVREEMNNAGAIEVSMPVVQPADLWQESGRWEQYGPELLRFVDRGERPFVLGPTHEEVITDLIRNELSSYKQLPLNFYQIQTKFRDEVRPRFGVMRSREFLMKDAYSFHTSQESLQETYDAMYAAYSKIFSRMGLDFRAVQADTGSIGGSASHEFQVLAQSGEDDVVFSDTSDYAANIELAEAIAPKEPRAAATQEMTLVDTPNAKTIAELVEQFNLPIEKTVKTLLVKAVEGSSFPLVALLVRGDHELNEVKAEKLPQVASPLTFATEEEIRAVVKAGPGSLGPVNMPIPVVIDRTVAAMSDFAAGANIDGKHYFGINWDRDVATPEVADIRNVVAGDPSPDGQGTLLIKRGIEVGHIFQLGTKYSEALKASVQGEDGRNQILTMGCYGIGVTRVVAAAIEQNYDERGIVWPDAIAPFQVAILPMNMHKSFRVQELAEKLYSELRAQGIEVLLDDRKERPGVMFADMELIGIPHTIVLGDRNLDNDDIEYKYRRNGEKQLIKTGDIVEYLVKQIKG</sequence>
<evidence type="ECO:0000255" key="1">
    <source>
        <dbReference type="HAMAP-Rule" id="MF_01569"/>
    </source>
</evidence>
<evidence type="ECO:0000305" key="2"/>
<organism>
    <name type="scientific">Shigella flexneri serotype 5b (strain 8401)</name>
    <dbReference type="NCBI Taxonomy" id="373384"/>
    <lineage>
        <taxon>Bacteria</taxon>
        <taxon>Pseudomonadati</taxon>
        <taxon>Pseudomonadota</taxon>
        <taxon>Gammaproteobacteria</taxon>
        <taxon>Enterobacterales</taxon>
        <taxon>Enterobacteriaceae</taxon>
        <taxon>Shigella</taxon>
    </lineage>
</organism>
<feature type="chain" id="PRO_0000288380" description="Proline--tRNA ligase">
    <location>
        <begin position="1"/>
        <end position="572"/>
    </location>
</feature>
<keyword id="KW-0030">Aminoacyl-tRNA synthetase</keyword>
<keyword id="KW-0067">ATP-binding</keyword>
<keyword id="KW-0963">Cytoplasm</keyword>
<keyword id="KW-0436">Ligase</keyword>
<keyword id="KW-0547">Nucleotide-binding</keyword>
<keyword id="KW-0648">Protein biosynthesis</keyword>